<keyword id="KW-1003">Cell membrane</keyword>
<keyword id="KW-0378">Hydrolase</keyword>
<keyword id="KW-0472">Membrane</keyword>
<keyword id="KW-1185">Reference proteome</keyword>
<keyword id="KW-0812">Transmembrane</keyword>
<keyword id="KW-1133">Transmembrane helix</keyword>
<gene>
    <name evidence="1" type="primary">uppP</name>
    <name type="ordered locus">Mthe_1629</name>
</gene>
<name>UPPP_METTP</name>
<dbReference type="EC" id="3.6.1.27" evidence="1"/>
<dbReference type="EMBL" id="CP000477">
    <property type="protein sequence ID" value="ABK15396.1"/>
    <property type="molecule type" value="Genomic_DNA"/>
</dbReference>
<dbReference type="RefSeq" id="WP_011696774.1">
    <property type="nucleotide sequence ID" value="NC_008553.1"/>
</dbReference>
<dbReference type="SMR" id="A0B9M2"/>
<dbReference type="STRING" id="349307.Mthe_1629"/>
<dbReference type="GeneID" id="4462206"/>
<dbReference type="KEGG" id="mtp:Mthe_1629"/>
<dbReference type="HOGENOM" id="CLU_060296_1_2_2"/>
<dbReference type="OrthoDB" id="65864at2157"/>
<dbReference type="Proteomes" id="UP000000674">
    <property type="component" value="Chromosome"/>
</dbReference>
<dbReference type="GO" id="GO:0005886">
    <property type="term" value="C:plasma membrane"/>
    <property type="evidence" value="ECO:0007669"/>
    <property type="project" value="UniProtKB-SubCell"/>
</dbReference>
<dbReference type="GO" id="GO:0050380">
    <property type="term" value="F:undecaprenyl-diphosphatase activity"/>
    <property type="evidence" value="ECO:0007669"/>
    <property type="project" value="UniProtKB-UniRule"/>
</dbReference>
<dbReference type="HAMAP" id="MF_01006">
    <property type="entry name" value="Undec_diphosphatase"/>
    <property type="match status" value="1"/>
</dbReference>
<dbReference type="InterPro" id="IPR003824">
    <property type="entry name" value="UppP"/>
</dbReference>
<dbReference type="PANTHER" id="PTHR30622">
    <property type="entry name" value="UNDECAPRENYL-DIPHOSPHATASE"/>
    <property type="match status" value="1"/>
</dbReference>
<dbReference type="PANTHER" id="PTHR30622:SF2">
    <property type="entry name" value="UNDECAPRENYL-DIPHOSPHATASE"/>
    <property type="match status" value="1"/>
</dbReference>
<dbReference type="Pfam" id="PF02673">
    <property type="entry name" value="BacA"/>
    <property type="match status" value="1"/>
</dbReference>
<protein>
    <recommendedName>
        <fullName evidence="1">Undecaprenyl-diphosphatase</fullName>
        <ecNumber evidence="1">3.6.1.27</ecNumber>
    </recommendedName>
    <alternativeName>
        <fullName evidence="1">Undecaprenyl pyrophosphate phosphatase</fullName>
    </alternativeName>
</protein>
<accession>A0B9M2</accession>
<evidence type="ECO:0000255" key="1">
    <source>
        <dbReference type="HAMAP-Rule" id="MF_01006"/>
    </source>
</evidence>
<comment type="function">
    <text evidence="1">Catalyzes the dephosphorylation of undecaprenyl diphosphate (UPP).</text>
</comment>
<comment type="catalytic activity">
    <reaction evidence="1">
        <text>di-trans,octa-cis-undecaprenyl diphosphate + H2O = di-trans,octa-cis-undecaprenyl phosphate + phosphate + H(+)</text>
        <dbReference type="Rhea" id="RHEA:28094"/>
        <dbReference type="ChEBI" id="CHEBI:15377"/>
        <dbReference type="ChEBI" id="CHEBI:15378"/>
        <dbReference type="ChEBI" id="CHEBI:43474"/>
        <dbReference type="ChEBI" id="CHEBI:58405"/>
        <dbReference type="ChEBI" id="CHEBI:60392"/>
        <dbReference type="EC" id="3.6.1.27"/>
    </reaction>
</comment>
<comment type="subcellular location">
    <subcellularLocation>
        <location evidence="1">Cell membrane</location>
        <topology evidence="1">Multi-pass membrane protein</topology>
    </subcellularLocation>
</comment>
<comment type="similarity">
    <text evidence="1">Belongs to the UppP family.</text>
</comment>
<feature type="chain" id="PRO_0000290784" description="Undecaprenyl-diphosphatase">
    <location>
        <begin position="1"/>
        <end position="256"/>
    </location>
</feature>
<feature type="transmembrane region" description="Helical" evidence="1">
    <location>
        <begin position="39"/>
        <end position="59"/>
    </location>
</feature>
<feature type="transmembrane region" description="Helical" evidence="1">
    <location>
        <begin position="77"/>
        <end position="97"/>
    </location>
</feature>
<feature type="transmembrane region" description="Helical" evidence="1">
    <location>
        <begin position="101"/>
        <end position="121"/>
    </location>
</feature>
<feature type="transmembrane region" description="Helical" evidence="1">
    <location>
        <begin position="135"/>
        <end position="155"/>
    </location>
</feature>
<feature type="transmembrane region" description="Helical" evidence="1">
    <location>
        <begin position="176"/>
        <end position="196"/>
    </location>
</feature>
<feature type="transmembrane region" description="Helical" evidence="1">
    <location>
        <begin position="206"/>
        <end position="226"/>
    </location>
</feature>
<feature type="transmembrane region" description="Helical" evidence="1">
    <location>
        <begin position="233"/>
        <end position="253"/>
    </location>
</feature>
<organism>
    <name type="scientific">Methanothrix thermoacetophila (strain DSM 6194 / JCM 14653 / NBRC 101360 / PT)</name>
    <name type="common">Methanosaeta thermophila</name>
    <dbReference type="NCBI Taxonomy" id="349307"/>
    <lineage>
        <taxon>Archaea</taxon>
        <taxon>Methanobacteriati</taxon>
        <taxon>Methanobacteriota</taxon>
        <taxon>Stenosarchaea group</taxon>
        <taxon>Methanomicrobia</taxon>
        <taxon>Methanotrichales</taxon>
        <taxon>Methanotrichaceae</taxon>
        <taxon>Methanothrix</taxon>
    </lineage>
</organism>
<proteinExistence type="inferred from homology"/>
<sequence>MDALQALVLGALQGITEWLPVSSEGQTMLAMISWLGMRPTDALSCSIFLHTGTMLAVLVRFRSRLLGMLNTESKLMRTVIVATLFTGITGVPLYMLFRDRFTGGEQATLLIGSLLIATGLMLRLRSSSTKDMEEISTKDMVLLGLAQGFSILPGVSRSGTTLTVLLMRGVKQDDALMVSFIISVPAVLGAIALDCLAGSPLSIRSLPGAVMLASSFITGYATMDVLMRFSRNVSFSWFCITMGMITLALTALPEVQ</sequence>
<reference key="1">
    <citation type="submission" date="2006-10" db="EMBL/GenBank/DDBJ databases">
        <title>Complete sequence of Methanosaeta thermophila PT.</title>
        <authorList>
            <consortium name="US DOE Joint Genome Institute"/>
            <person name="Copeland A."/>
            <person name="Lucas S."/>
            <person name="Lapidus A."/>
            <person name="Barry K."/>
            <person name="Detter J.C."/>
            <person name="Glavina del Rio T."/>
            <person name="Hammon N."/>
            <person name="Israni S."/>
            <person name="Pitluck S."/>
            <person name="Chain P."/>
            <person name="Malfatti S."/>
            <person name="Shin M."/>
            <person name="Vergez L."/>
            <person name="Schmutz J."/>
            <person name="Larimer F."/>
            <person name="Land M."/>
            <person name="Hauser L."/>
            <person name="Kyrpides N."/>
            <person name="Kim E."/>
            <person name="Smith K.S."/>
            <person name="Ingram-Smith C."/>
            <person name="Richardson P."/>
        </authorList>
    </citation>
    <scope>NUCLEOTIDE SEQUENCE [LARGE SCALE GENOMIC DNA]</scope>
    <source>
        <strain>DSM 6194 / JCM 14653 / NBRC 101360 / PT</strain>
    </source>
</reference>